<sequence length="33" mass="3779">MIELLLFGIILGLISCVLAGLFVSAYYQYKRNR</sequence>
<organism>
    <name type="scientific">Bigelowiella natans</name>
    <name type="common">Pedinomonas minutissima</name>
    <name type="synonym">Chlorarachnion sp. (strain CCMP621)</name>
    <dbReference type="NCBI Taxonomy" id="227086"/>
    <lineage>
        <taxon>Eukaryota</taxon>
        <taxon>Sar</taxon>
        <taxon>Rhizaria</taxon>
        <taxon>Cercozoa</taxon>
        <taxon>Chlorarachniophyceae</taxon>
        <taxon>Bigelowiella</taxon>
    </lineage>
</organism>
<gene>
    <name evidence="1" type="primary">petG</name>
</gene>
<protein>
    <recommendedName>
        <fullName evidence="1">Cytochrome b6-f complex subunit 5</fullName>
    </recommendedName>
    <alternativeName>
        <fullName evidence="1">Cytochrome b6-f complex subunit PetG</fullName>
    </alternativeName>
    <alternativeName>
        <fullName evidence="1">Cytochrome b6-f complex subunit V</fullName>
    </alternativeName>
</protein>
<keyword id="KW-0150">Chloroplast</keyword>
<keyword id="KW-0249">Electron transport</keyword>
<keyword id="KW-0472">Membrane</keyword>
<keyword id="KW-0602">Photosynthesis</keyword>
<keyword id="KW-0934">Plastid</keyword>
<keyword id="KW-0793">Thylakoid</keyword>
<keyword id="KW-0812">Transmembrane</keyword>
<keyword id="KW-1133">Transmembrane helix</keyword>
<keyword id="KW-0813">Transport</keyword>
<comment type="function">
    <text evidence="1">Component of the cytochrome b6-f complex, which mediates electron transfer between photosystem II (PSII) and photosystem I (PSI), cyclic electron flow around PSI, and state transitions. PetG is required for either the stability or assembly of the cytochrome b6-f complex.</text>
</comment>
<comment type="subunit">
    <text evidence="1">The 4 large subunits of the cytochrome b6-f complex are cytochrome b6, subunit IV (17 kDa polypeptide, PetD), cytochrome f and the Rieske protein, while the 4 small subunits are PetG, PetL, PetM and PetN. The complex functions as a dimer.</text>
</comment>
<comment type="subcellular location">
    <subcellularLocation>
        <location evidence="1">Plastid</location>
        <location evidence="1">Chloroplast thylakoid membrane</location>
        <topology evidence="1">Single-pass membrane protein</topology>
    </subcellularLocation>
</comment>
<comment type="similarity">
    <text evidence="1">Belongs to the PetG family.</text>
</comment>
<evidence type="ECO:0000255" key="1">
    <source>
        <dbReference type="HAMAP-Rule" id="MF_00432"/>
    </source>
</evidence>
<dbReference type="EMBL" id="DQ851108">
    <property type="protein sequence ID" value="ABG91396.1"/>
    <property type="molecule type" value="Genomic_DNA"/>
</dbReference>
<dbReference type="RefSeq" id="YP_778564.1">
    <property type="nucleotide sequence ID" value="NC_008408.1"/>
</dbReference>
<dbReference type="SMR" id="Q06J63"/>
<dbReference type="GeneID" id="4352981"/>
<dbReference type="GO" id="GO:0009535">
    <property type="term" value="C:chloroplast thylakoid membrane"/>
    <property type="evidence" value="ECO:0007669"/>
    <property type="project" value="UniProtKB-SubCell"/>
</dbReference>
<dbReference type="GO" id="GO:0009512">
    <property type="term" value="C:cytochrome b6f complex"/>
    <property type="evidence" value="ECO:0007669"/>
    <property type="project" value="InterPro"/>
</dbReference>
<dbReference type="GO" id="GO:0045158">
    <property type="term" value="F:electron transporter, transferring electrons within cytochrome b6/f complex of photosystem II activity"/>
    <property type="evidence" value="ECO:0007669"/>
    <property type="project" value="UniProtKB-UniRule"/>
</dbReference>
<dbReference type="GO" id="GO:0017004">
    <property type="term" value="P:cytochrome complex assembly"/>
    <property type="evidence" value="ECO:0007669"/>
    <property type="project" value="UniProtKB-UniRule"/>
</dbReference>
<dbReference type="GO" id="GO:0015979">
    <property type="term" value="P:photosynthesis"/>
    <property type="evidence" value="ECO:0007669"/>
    <property type="project" value="UniProtKB-KW"/>
</dbReference>
<dbReference type="HAMAP" id="MF_00432">
    <property type="entry name" value="Cytb6_f_PetG"/>
    <property type="match status" value="1"/>
</dbReference>
<dbReference type="InterPro" id="IPR003683">
    <property type="entry name" value="Cyt_6/f_cplx_su5"/>
</dbReference>
<dbReference type="InterPro" id="IPR036099">
    <property type="entry name" value="Cyt_6/f_cplx_su5_sf"/>
</dbReference>
<dbReference type="Pfam" id="PF02529">
    <property type="entry name" value="PetG"/>
    <property type="match status" value="1"/>
</dbReference>
<dbReference type="SUPFAM" id="SSF103446">
    <property type="entry name" value="PetG subunit of the cytochrome b6f complex"/>
    <property type="match status" value="1"/>
</dbReference>
<name>PETG_BIGNA</name>
<reference key="1">
    <citation type="journal article" date="2007" name="Mol. Biol. Evol.">
        <title>The complete chloroplast genome of the chlorarachniophyte Bigelowiella natans: evidence for independent origins of chlorarachniophyte and euglenid secondary endosymbionts.</title>
        <authorList>
            <person name="Rogers M.B."/>
            <person name="Gilson P.R."/>
            <person name="Su V."/>
            <person name="McFadden G.I."/>
            <person name="Keeling P.J."/>
        </authorList>
    </citation>
    <scope>NUCLEOTIDE SEQUENCE [LARGE SCALE GENOMIC DNA]</scope>
</reference>
<proteinExistence type="inferred from homology"/>
<accession>Q06J63</accession>
<geneLocation type="chloroplast"/>
<feature type="chain" id="PRO_0000295868" description="Cytochrome b6-f complex subunit 5">
    <location>
        <begin position="1"/>
        <end position="33"/>
    </location>
</feature>
<feature type="transmembrane region" description="Helical" evidence="1">
    <location>
        <begin position="5"/>
        <end position="25"/>
    </location>
</feature>